<organism>
    <name type="scientific">Chlorobaculum tepidum (strain ATCC 49652 / DSM 12025 / NBRC 103806 / TLS)</name>
    <name type="common">Chlorobium tepidum</name>
    <dbReference type="NCBI Taxonomy" id="194439"/>
    <lineage>
        <taxon>Bacteria</taxon>
        <taxon>Pseudomonadati</taxon>
        <taxon>Chlorobiota</taxon>
        <taxon>Chlorobiia</taxon>
        <taxon>Chlorobiales</taxon>
        <taxon>Chlorobiaceae</taxon>
        <taxon>Chlorobaculum</taxon>
    </lineage>
</organism>
<name>YBEY_CHLTE</name>
<evidence type="ECO:0000255" key="1">
    <source>
        <dbReference type="HAMAP-Rule" id="MF_00009"/>
    </source>
</evidence>
<reference key="1">
    <citation type="journal article" date="2002" name="Proc. Natl. Acad. Sci. U.S.A.">
        <title>The complete genome sequence of Chlorobium tepidum TLS, a photosynthetic, anaerobic, green-sulfur bacterium.</title>
        <authorList>
            <person name="Eisen J.A."/>
            <person name="Nelson K.E."/>
            <person name="Paulsen I.T."/>
            <person name="Heidelberg J.F."/>
            <person name="Wu M."/>
            <person name="Dodson R.J."/>
            <person name="DeBoy R.T."/>
            <person name="Gwinn M.L."/>
            <person name="Nelson W.C."/>
            <person name="Haft D.H."/>
            <person name="Hickey E.K."/>
            <person name="Peterson J.D."/>
            <person name="Durkin A.S."/>
            <person name="Kolonay J.F."/>
            <person name="Yang F."/>
            <person name="Holt I.E."/>
            <person name="Umayam L.A."/>
            <person name="Mason T.M."/>
            <person name="Brenner M."/>
            <person name="Shea T.P."/>
            <person name="Parksey D.S."/>
            <person name="Nierman W.C."/>
            <person name="Feldblyum T.V."/>
            <person name="Hansen C.L."/>
            <person name="Craven M.B."/>
            <person name="Radune D."/>
            <person name="Vamathevan J.J."/>
            <person name="Khouri H.M."/>
            <person name="White O."/>
            <person name="Gruber T.M."/>
            <person name="Ketchum K.A."/>
            <person name="Venter J.C."/>
            <person name="Tettelin H."/>
            <person name="Bryant D.A."/>
            <person name="Fraser C.M."/>
        </authorList>
    </citation>
    <scope>NUCLEOTIDE SEQUENCE [LARGE SCALE GENOMIC DNA]</scope>
    <source>
        <strain>ATCC 49652 / DSM 12025 / NBRC 103806 / TLS</strain>
    </source>
</reference>
<dbReference type="EC" id="3.1.-.-" evidence="1"/>
<dbReference type="EMBL" id="AE006470">
    <property type="protein sequence ID" value="AAM72612.1"/>
    <property type="molecule type" value="Genomic_DNA"/>
</dbReference>
<dbReference type="RefSeq" id="NP_662270.1">
    <property type="nucleotide sequence ID" value="NC_002932.3"/>
</dbReference>
<dbReference type="RefSeq" id="WP_010933051.1">
    <property type="nucleotide sequence ID" value="NC_002932.3"/>
</dbReference>
<dbReference type="SMR" id="Q8KCN1"/>
<dbReference type="STRING" id="194439.CT1383"/>
<dbReference type="EnsemblBacteria" id="AAM72612">
    <property type="protein sequence ID" value="AAM72612"/>
    <property type="gene ID" value="CT1383"/>
</dbReference>
<dbReference type="KEGG" id="cte:CT1383"/>
<dbReference type="PATRIC" id="fig|194439.7.peg.1257"/>
<dbReference type="eggNOG" id="COG0319">
    <property type="taxonomic scope" value="Bacteria"/>
</dbReference>
<dbReference type="HOGENOM" id="CLU_106710_3_3_10"/>
<dbReference type="OrthoDB" id="9811984at2"/>
<dbReference type="Proteomes" id="UP000001007">
    <property type="component" value="Chromosome"/>
</dbReference>
<dbReference type="GO" id="GO:0005737">
    <property type="term" value="C:cytoplasm"/>
    <property type="evidence" value="ECO:0007669"/>
    <property type="project" value="UniProtKB-SubCell"/>
</dbReference>
<dbReference type="GO" id="GO:0004222">
    <property type="term" value="F:metalloendopeptidase activity"/>
    <property type="evidence" value="ECO:0007669"/>
    <property type="project" value="InterPro"/>
</dbReference>
<dbReference type="GO" id="GO:0004521">
    <property type="term" value="F:RNA endonuclease activity"/>
    <property type="evidence" value="ECO:0007669"/>
    <property type="project" value="UniProtKB-UniRule"/>
</dbReference>
<dbReference type="GO" id="GO:0008270">
    <property type="term" value="F:zinc ion binding"/>
    <property type="evidence" value="ECO:0007669"/>
    <property type="project" value="UniProtKB-UniRule"/>
</dbReference>
<dbReference type="GO" id="GO:0006364">
    <property type="term" value="P:rRNA processing"/>
    <property type="evidence" value="ECO:0007669"/>
    <property type="project" value="UniProtKB-UniRule"/>
</dbReference>
<dbReference type="Gene3D" id="3.40.390.30">
    <property type="entry name" value="Metalloproteases ('zincins'), catalytic domain"/>
    <property type="match status" value="1"/>
</dbReference>
<dbReference type="HAMAP" id="MF_00009">
    <property type="entry name" value="Endoribonucl_YbeY"/>
    <property type="match status" value="1"/>
</dbReference>
<dbReference type="InterPro" id="IPR023091">
    <property type="entry name" value="MetalPrtase_cat_dom_sf_prd"/>
</dbReference>
<dbReference type="InterPro" id="IPR002036">
    <property type="entry name" value="YbeY"/>
</dbReference>
<dbReference type="InterPro" id="IPR020549">
    <property type="entry name" value="YbeY_CS"/>
</dbReference>
<dbReference type="NCBIfam" id="TIGR00043">
    <property type="entry name" value="rRNA maturation RNase YbeY"/>
    <property type="match status" value="1"/>
</dbReference>
<dbReference type="PANTHER" id="PTHR46986">
    <property type="entry name" value="ENDORIBONUCLEASE YBEY, CHLOROPLASTIC"/>
    <property type="match status" value="1"/>
</dbReference>
<dbReference type="PANTHER" id="PTHR46986:SF1">
    <property type="entry name" value="ENDORIBONUCLEASE YBEY, CHLOROPLASTIC"/>
    <property type="match status" value="1"/>
</dbReference>
<dbReference type="Pfam" id="PF02130">
    <property type="entry name" value="YbeY"/>
    <property type="match status" value="1"/>
</dbReference>
<dbReference type="SUPFAM" id="SSF55486">
    <property type="entry name" value="Metalloproteases ('zincins'), catalytic domain"/>
    <property type="match status" value="1"/>
</dbReference>
<dbReference type="PROSITE" id="PS01306">
    <property type="entry name" value="UPF0054"/>
    <property type="match status" value="1"/>
</dbReference>
<keyword id="KW-0963">Cytoplasm</keyword>
<keyword id="KW-0255">Endonuclease</keyword>
<keyword id="KW-0378">Hydrolase</keyword>
<keyword id="KW-0479">Metal-binding</keyword>
<keyword id="KW-0540">Nuclease</keyword>
<keyword id="KW-1185">Reference proteome</keyword>
<keyword id="KW-0690">Ribosome biogenesis</keyword>
<keyword id="KW-0698">rRNA processing</keyword>
<keyword id="KW-0862">Zinc</keyword>
<protein>
    <recommendedName>
        <fullName evidence="1">Endoribonuclease YbeY</fullName>
        <ecNumber evidence="1">3.1.-.-</ecNumber>
    </recommendedName>
</protein>
<sequence>MPLQIFNTTKRTIDETLLAEVIRLVIGEEGGAVGSIEAIYCGNKMIRRINRDFLGHDYVTDTITFGYNEGGEVDGEFYISLDVIESNARRFGVSFEDELLRVTIHSALHLMGYDDETSELRAAMSLREDHYLYRLRH</sequence>
<comment type="function">
    <text evidence="1">Single strand-specific metallo-endoribonuclease involved in late-stage 70S ribosome quality control and in maturation of the 3' terminus of the 16S rRNA.</text>
</comment>
<comment type="cofactor">
    <cofactor evidence="1">
        <name>Zn(2+)</name>
        <dbReference type="ChEBI" id="CHEBI:29105"/>
    </cofactor>
    <text evidence="1">Binds 1 zinc ion.</text>
</comment>
<comment type="subcellular location">
    <subcellularLocation>
        <location evidence="1">Cytoplasm</location>
    </subcellularLocation>
</comment>
<comment type="similarity">
    <text evidence="1">Belongs to the endoribonuclease YbeY family.</text>
</comment>
<feature type="chain" id="PRO_0000102437" description="Endoribonuclease YbeY">
    <location>
        <begin position="1"/>
        <end position="137"/>
    </location>
</feature>
<feature type="binding site" evidence="1">
    <location>
        <position position="105"/>
    </location>
    <ligand>
        <name>Zn(2+)</name>
        <dbReference type="ChEBI" id="CHEBI:29105"/>
        <note>catalytic</note>
    </ligand>
</feature>
<feature type="binding site" evidence="1">
    <location>
        <position position="109"/>
    </location>
    <ligand>
        <name>Zn(2+)</name>
        <dbReference type="ChEBI" id="CHEBI:29105"/>
        <note>catalytic</note>
    </ligand>
</feature>
<feature type="binding site" evidence="1">
    <location>
        <position position="115"/>
    </location>
    <ligand>
        <name>Zn(2+)</name>
        <dbReference type="ChEBI" id="CHEBI:29105"/>
        <note>catalytic</note>
    </ligand>
</feature>
<gene>
    <name evidence="1" type="primary">ybeY</name>
    <name type="ordered locus">CT1383</name>
</gene>
<proteinExistence type="inferred from homology"/>
<accession>Q8KCN1</accession>